<dbReference type="EMBL" id="CR848038">
    <property type="protein sequence ID" value="CAH63699.1"/>
    <property type="molecule type" value="Genomic_DNA"/>
</dbReference>
<dbReference type="RefSeq" id="WP_011096929.1">
    <property type="nucleotide sequence ID" value="NC_004552.2"/>
</dbReference>
<dbReference type="SMR" id="Q5L6M2"/>
<dbReference type="KEGG" id="cab:CAB243"/>
<dbReference type="eggNOG" id="COG1872">
    <property type="taxonomic scope" value="Bacteria"/>
</dbReference>
<dbReference type="HOGENOM" id="CLU_130694_6_2_0"/>
<dbReference type="OrthoDB" id="9800587at2"/>
<dbReference type="Proteomes" id="UP000001012">
    <property type="component" value="Chromosome"/>
</dbReference>
<dbReference type="GO" id="GO:0005737">
    <property type="term" value="C:cytoplasm"/>
    <property type="evidence" value="ECO:0007669"/>
    <property type="project" value="TreeGrafter"/>
</dbReference>
<dbReference type="Gene3D" id="3.30.1200.10">
    <property type="entry name" value="YggU-like"/>
    <property type="match status" value="1"/>
</dbReference>
<dbReference type="HAMAP" id="MF_00634">
    <property type="entry name" value="UPF0235"/>
    <property type="match status" value="1"/>
</dbReference>
<dbReference type="InterPro" id="IPR003746">
    <property type="entry name" value="DUF167"/>
</dbReference>
<dbReference type="InterPro" id="IPR036591">
    <property type="entry name" value="YggU-like_sf"/>
</dbReference>
<dbReference type="NCBIfam" id="TIGR00251">
    <property type="entry name" value="DUF167 family protein"/>
    <property type="match status" value="1"/>
</dbReference>
<dbReference type="NCBIfam" id="NF001887">
    <property type="entry name" value="PRK00647.1"/>
    <property type="match status" value="1"/>
</dbReference>
<dbReference type="PANTHER" id="PTHR13420">
    <property type="entry name" value="UPF0235 PROTEIN C15ORF40"/>
    <property type="match status" value="1"/>
</dbReference>
<dbReference type="PANTHER" id="PTHR13420:SF7">
    <property type="entry name" value="UPF0235 PROTEIN C15ORF40"/>
    <property type="match status" value="1"/>
</dbReference>
<dbReference type="Pfam" id="PF02594">
    <property type="entry name" value="DUF167"/>
    <property type="match status" value="1"/>
</dbReference>
<dbReference type="SMART" id="SM01152">
    <property type="entry name" value="DUF167"/>
    <property type="match status" value="1"/>
</dbReference>
<dbReference type="SUPFAM" id="SSF69786">
    <property type="entry name" value="YggU-like"/>
    <property type="match status" value="1"/>
</dbReference>
<proteinExistence type="inferred from homology"/>
<reference key="1">
    <citation type="journal article" date="2005" name="Genome Res.">
        <title>The Chlamydophila abortus genome sequence reveals an array of variable proteins that contribute to interspecies variation.</title>
        <authorList>
            <person name="Thomson N.R."/>
            <person name="Yeats C."/>
            <person name="Bell K."/>
            <person name="Holden M.T.G."/>
            <person name="Bentley S.D."/>
            <person name="Livingstone M."/>
            <person name="Cerdeno-Tarraga A.-M."/>
            <person name="Harris B."/>
            <person name="Doggett J."/>
            <person name="Ormond D."/>
            <person name="Mungall K."/>
            <person name="Clarke K."/>
            <person name="Feltwell T."/>
            <person name="Hance Z."/>
            <person name="Sanders M."/>
            <person name="Quail M.A."/>
            <person name="Price C."/>
            <person name="Barrell B.G."/>
            <person name="Parkhill J."/>
            <person name="Longbottom D."/>
        </authorList>
    </citation>
    <scope>NUCLEOTIDE SEQUENCE [LARGE SCALE GENOMIC DNA]</scope>
    <source>
        <strain>DSM 27085 / S26/3</strain>
    </source>
</reference>
<evidence type="ECO:0000255" key="1">
    <source>
        <dbReference type="HAMAP-Rule" id="MF_00634"/>
    </source>
</evidence>
<organism>
    <name type="scientific">Chlamydia abortus (strain DSM 27085 / S26/3)</name>
    <name type="common">Chlamydophila abortus</name>
    <dbReference type="NCBI Taxonomy" id="218497"/>
    <lineage>
        <taxon>Bacteria</taxon>
        <taxon>Pseudomonadati</taxon>
        <taxon>Chlamydiota</taxon>
        <taxon>Chlamydiia</taxon>
        <taxon>Chlamydiales</taxon>
        <taxon>Chlamydiaceae</taxon>
        <taxon>Chlamydia/Chlamydophila group</taxon>
        <taxon>Chlamydia</taxon>
    </lineage>
</organism>
<sequence>MHQEYWILEVKVTPKSKQNTIVGFEGEVLKIRVTEVPEKGKANEAVIALLAKALSLPKRDITLIPGDTSRKKRILLPKSTESIVSHWREKGFYAGL</sequence>
<comment type="similarity">
    <text evidence="1">Belongs to the UPF0235 family.</text>
</comment>
<protein>
    <recommendedName>
        <fullName evidence="1">UPF0235 protein CAB243</fullName>
    </recommendedName>
</protein>
<accession>Q5L6M2</accession>
<name>Y243_CHLAB</name>
<gene>
    <name type="ordered locus">CAB243</name>
</gene>
<feature type="chain" id="PRO_1000056760" description="UPF0235 protein CAB243">
    <location>
        <begin position="1"/>
        <end position="96"/>
    </location>
</feature>